<keyword id="KW-0143">Chaperone</keyword>
<keyword id="KW-0963">Cytoplasm</keyword>
<proteinExistence type="inferred from homology"/>
<evidence type="ECO:0000255" key="1">
    <source>
        <dbReference type="HAMAP-Rule" id="MF_00580"/>
    </source>
</evidence>
<sequence length="94" mass="10149">MLKPLGDRVVLKAETEEEKTVGGIVLASNVKEKPTTGKVIAVGEGRTLENGQKLAPAVKEGDRVLFDKYAGNEVEYNGEKFLVVHAKDLVAIVE</sequence>
<feature type="chain" id="PRO_1000129675" description="Co-chaperonin GroES">
    <location>
        <begin position="1"/>
        <end position="94"/>
    </location>
</feature>
<reference key="1">
    <citation type="journal article" date="2008" name="DNA Res.">
        <title>Comparative genome analysis of Lactobacillus reuteri and Lactobacillus fermentum reveal a genomic island for reuterin and cobalamin production.</title>
        <authorList>
            <person name="Morita H."/>
            <person name="Toh H."/>
            <person name="Fukuda S."/>
            <person name="Horikawa H."/>
            <person name="Oshima K."/>
            <person name="Suzuki T."/>
            <person name="Murakami M."/>
            <person name="Hisamatsu S."/>
            <person name="Kato Y."/>
            <person name="Takizawa T."/>
            <person name="Fukuoka H."/>
            <person name="Yoshimura T."/>
            <person name="Itoh K."/>
            <person name="O'Sullivan D.J."/>
            <person name="McKay L.L."/>
            <person name="Ohno H."/>
            <person name="Kikuchi J."/>
            <person name="Masaoka T."/>
            <person name="Hattori M."/>
        </authorList>
    </citation>
    <scope>NUCLEOTIDE SEQUENCE [LARGE SCALE GENOMIC DNA]</scope>
    <source>
        <strain>JCM 1112</strain>
    </source>
</reference>
<gene>
    <name evidence="1" type="primary">groES</name>
    <name evidence="1" type="synonym">groS</name>
    <name type="ordered locus">LAR_0342</name>
</gene>
<dbReference type="EMBL" id="AP007281">
    <property type="protein sequence ID" value="BAG24858.1"/>
    <property type="molecule type" value="Genomic_DNA"/>
</dbReference>
<dbReference type="RefSeq" id="WP_003666368.1">
    <property type="nucleotide sequence ID" value="NC_010609.1"/>
</dbReference>
<dbReference type="SMR" id="B2G5X6"/>
<dbReference type="GeneID" id="77190156"/>
<dbReference type="KEGG" id="lrf:LAR_0342"/>
<dbReference type="HOGENOM" id="CLU_132825_2_1_9"/>
<dbReference type="GO" id="GO:0005737">
    <property type="term" value="C:cytoplasm"/>
    <property type="evidence" value="ECO:0007669"/>
    <property type="project" value="UniProtKB-SubCell"/>
</dbReference>
<dbReference type="GO" id="GO:0005524">
    <property type="term" value="F:ATP binding"/>
    <property type="evidence" value="ECO:0007669"/>
    <property type="project" value="InterPro"/>
</dbReference>
<dbReference type="GO" id="GO:0046872">
    <property type="term" value="F:metal ion binding"/>
    <property type="evidence" value="ECO:0007669"/>
    <property type="project" value="TreeGrafter"/>
</dbReference>
<dbReference type="GO" id="GO:0044183">
    <property type="term" value="F:protein folding chaperone"/>
    <property type="evidence" value="ECO:0007669"/>
    <property type="project" value="InterPro"/>
</dbReference>
<dbReference type="GO" id="GO:0051087">
    <property type="term" value="F:protein-folding chaperone binding"/>
    <property type="evidence" value="ECO:0007669"/>
    <property type="project" value="TreeGrafter"/>
</dbReference>
<dbReference type="GO" id="GO:0051082">
    <property type="term" value="F:unfolded protein binding"/>
    <property type="evidence" value="ECO:0007669"/>
    <property type="project" value="TreeGrafter"/>
</dbReference>
<dbReference type="GO" id="GO:0051085">
    <property type="term" value="P:chaperone cofactor-dependent protein refolding"/>
    <property type="evidence" value="ECO:0007669"/>
    <property type="project" value="TreeGrafter"/>
</dbReference>
<dbReference type="CDD" id="cd00320">
    <property type="entry name" value="cpn10"/>
    <property type="match status" value="1"/>
</dbReference>
<dbReference type="FunFam" id="2.30.33.40:FF:000001">
    <property type="entry name" value="10 kDa chaperonin"/>
    <property type="match status" value="1"/>
</dbReference>
<dbReference type="Gene3D" id="2.30.33.40">
    <property type="entry name" value="GroES chaperonin"/>
    <property type="match status" value="1"/>
</dbReference>
<dbReference type="HAMAP" id="MF_00580">
    <property type="entry name" value="CH10"/>
    <property type="match status" value="1"/>
</dbReference>
<dbReference type="InterPro" id="IPR020818">
    <property type="entry name" value="Chaperonin_GroES"/>
</dbReference>
<dbReference type="InterPro" id="IPR037124">
    <property type="entry name" value="Chaperonin_GroES_sf"/>
</dbReference>
<dbReference type="InterPro" id="IPR018369">
    <property type="entry name" value="Chaprnonin_Cpn10_CS"/>
</dbReference>
<dbReference type="InterPro" id="IPR011032">
    <property type="entry name" value="GroES-like_sf"/>
</dbReference>
<dbReference type="NCBIfam" id="NF001531">
    <property type="entry name" value="PRK00364.2-2"/>
    <property type="match status" value="1"/>
</dbReference>
<dbReference type="NCBIfam" id="NF001533">
    <property type="entry name" value="PRK00364.2-4"/>
    <property type="match status" value="1"/>
</dbReference>
<dbReference type="NCBIfam" id="NF001534">
    <property type="entry name" value="PRK00364.2-5"/>
    <property type="match status" value="1"/>
</dbReference>
<dbReference type="PANTHER" id="PTHR10772">
    <property type="entry name" value="10 KDA HEAT SHOCK PROTEIN"/>
    <property type="match status" value="1"/>
</dbReference>
<dbReference type="PANTHER" id="PTHR10772:SF58">
    <property type="entry name" value="CO-CHAPERONIN GROES"/>
    <property type="match status" value="1"/>
</dbReference>
<dbReference type="Pfam" id="PF00166">
    <property type="entry name" value="Cpn10"/>
    <property type="match status" value="1"/>
</dbReference>
<dbReference type="PRINTS" id="PR00297">
    <property type="entry name" value="CHAPERONIN10"/>
</dbReference>
<dbReference type="SMART" id="SM00883">
    <property type="entry name" value="Cpn10"/>
    <property type="match status" value="1"/>
</dbReference>
<dbReference type="SUPFAM" id="SSF50129">
    <property type="entry name" value="GroES-like"/>
    <property type="match status" value="1"/>
</dbReference>
<dbReference type="PROSITE" id="PS00681">
    <property type="entry name" value="CHAPERONINS_CPN10"/>
    <property type="match status" value="1"/>
</dbReference>
<organism>
    <name type="scientific">Limosilactobacillus reuteri subsp. reuteri (strain JCM 1112)</name>
    <name type="common">Lactobacillus reuteri</name>
    <dbReference type="NCBI Taxonomy" id="557433"/>
    <lineage>
        <taxon>Bacteria</taxon>
        <taxon>Bacillati</taxon>
        <taxon>Bacillota</taxon>
        <taxon>Bacilli</taxon>
        <taxon>Lactobacillales</taxon>
        <taxon>Lactobacillaceae</taxon>
        <taxon>Limosilactobacillus</taxon>
    </lineage>
</organism>
<accession>B2G5X6</accession>
<comment type="function">
    <text evidence="1">Together with the chaperonin GroEL, plays an essential role in assisting protein folding. The GroEL-GroES system forms a nano-cage that allows encapsulation of the non-native substrate proteins and provides a physical environment optimized to promote and accelerate protein folding. GroES binds to the apical surface of the GroEL ring, thereby capping the opening of the GroEL channel.</text>
</comment>
<comment type="subunit">
    <text evidence="1">Heptamer of 7 subunits arranged in a ring. Interacts with the chaperonin GroEL.</text>
</comment>
<comment type="subcellular location">
    <subcellularLocation>
        <location evidence="1">Cytoplasm</location>
    </subcellularLocation>
</comment>
<comment type="similarity">
    <text evidence="1">Belongs to the GroES chaperonin family.</text>
</comment>
<name>CH10_LIMRJ</name>
<protein>
    <recommendedName>
        <fullName evidence="1">Co-chaperonin GroES</fullName>
    </recommendedName>
    <alternativeName>
        <fullName evidence="1">10 kDa chaperonin</fullName>
    </alternativeName>
    <alternativeName>
        <fullName evidence="1">Chaperonin-10</fullName>
        <shortName evidence="1">Cpn10</shortName>
    </alternativeName>
</protein>